<comment type="subcellular location">
    <subcellularLocation>
        <location>Plastid</location>
        <location>Chloroplast</location>
    </subcellularLocation>
</comment>
<comment type="similarity">
    <text evidence="1">Belongs to the bacterial ribosomal protein bL33 family.</text>
</comment>
<sequence>MAKSKGARIVVTLECRSAEGVYRYTTTKNRRNNPNKMELKKYCPLSKKHEVFKEIK</sequence>
<evidence type="ECO:0000255" key="1">
    <source>
        <dbReference type="HAMAP-Rule" id="MF_00294"/>
    </source>
</evidence>
<evidence type="ECO:0000305" key="2"/>
<accession>A6MVX6</accession>
<geneLocation type="chloroplast"/>
<name>RK33_RHDSA</name>
<protein>
    <recommendedName>
        <fullName evidence="1">Large ribosomal subunit protein bL33c</fullName>
    </recommendedName>
    <alternativeName>
        <fullName evidence="2">50S ribosomal protein L33, chloroplastic</fullName>
    </alternativeName>
</protein>
<reference key="1">
    <citation type="journal article" date="2007" name="Mol. Biol. Evol.">
        <title>Plastid genome sequence of the cryptophyte alga Rhodomonas salina CCMP1319: lateral transfer of putative DNA replication machinery and a test of chromist plastid phylogeny.</title>
        <authorList>
            <person name="Khan H."/>
            <person name="Parks N."/>
            <person name="Kozera C."/>
            <person name="Curtis B.A."/>
            <person name="Parsons B.J."/>
            <person name="Bowman S."/>
            <person name="Archibald J.M."/>
        </authorList>
    </citation>
    <scope>NUCLEOTIDE SEQUENCE [LARGE SCALE GENOMIC DNA]</scope>
    <source>
        <strain>CCMP1319 / NEPCC76 / CS-174</strain>
    </source>
</reference>
<organism>
    <name type="scientific">Rhodomonas salina</name>
    <name type="common">Cryptomonas salina</name>
    <dbReference type="NCBI Taxonomy" id="52970"/>
    <lineage>
        <taxon>Eukaryota</taxon>
        <taxon>Cryptophyceae</taxon>
        <taxon>Pyrenomonadales</taxon>
        <taxon>Pyrenomonadaceae</taxon>
        <taxon>Rhodomonas</taxon>
    </lineage>
</organism>
<dbReference type="EMBL" id="EF508371">
    <property type="protein sequence ID" value="ABO70748.1"/>
    <property type="molecule type" value="Genomic_DNA"/>
</dbReference>
<dbReference type="RefSeq" id="YP_001293555.1">
    <property type="nucleotide sequence ID" value="NC_009573.1"/>
</dbReference>
<dbReference type="SMR" id="A6MVX6"/>
<dbReference type="GeneID" id="5228597"/>
<dbReference type="GO" id="GO:0009507">
    <property type="term" value="C:chloroplast"/>
    <property type="evidence" value="ECO:0007669"/>
    <property type="project" value="UniProtKB-SubCell"/>
</dbReference>
<dbReference type="GO" id="GO:1990904">
    <property type="term" value="C:ribonucleoprotein complex"/>
    <property type="evidence" value="ECO:0007669"/>
    <property type="project" value="UniProtKB-KW"/>
</dbReference>
<dbReference type="GO" id="GO:0005840">
    <property type="term" value="C:ribosome"/>
    <property type="evidence" value="ECO:0007669"/>
    <property type="project" value="UniProtKB-KW"/>
</dbReference>
<dbReference type="GO" id="GO:0003735">
    <property type="term" value="F:structural constituent of ribosome"/>
    <property type="evidence" value="ECO:0007669"/>
    <property type="project" value="InterPro"/>
</dbReference>
<dbReference type="GO" id="GO:0006412">
    <property type="term" value="P:translation"/>
    <property type="evidence" value="ECO:0007669"/>
    <property type="project" value="UniProtKB-UniRule"/>
</dbReference>
<dbReference type="Gene3D" id="2.20.28.120">
    <property type="entry name" value="Ribosomal protein L33"/>
    <property type="match status" value="1"/>
</dbReference>
<dbReference type="HAMAP" id="MF_00294">
    <property type="entry name" value="Ribosomal_bL33"/>
    <property type="match status" value="1"/>
</dbReference>
<dbReference type="InterPro" id="IPR001705">
    <property type="entry name" value="Ribosomal_bL33"/>
</dbReference>
<dbReference type="InterPro" id="IPR018264">
    <property type="entry name" value="Ribosomal_bL33_CS"/>
</dbReference>
<dbReference type="InterPro" id="IPR038584">
    <property type="entry name" value="Ribosomal_bL33_sf"/>
</dbReference>
<dbReference type="InterPro" id="IPR011332">
    <property type="entry name" value="Ribosomal_zn-bd"/>
</dbReference>
<dbReference type="NCBIfam" id="NF001764">
    <property type="entry name" value="PRK00504.1"/>
    <property type="match status" value="1"/>
</dbReference>
<dbReference type="NCBIfam" id="NF001860">
    <property type="entry name" value="PRK00595.1"/>
    <property type="match status" value="1"/>
</dbReference>
<dbReference type="NCBIfam" id="TIGR01023">
    <property type="entry name" value="rpmG_bact"/>
    <property type="match status" value="1"/>
</dbReference>
<dbReference type="PANTHER" id="PTHR43168">
    <property type="entry name" value="50S RIBOSOMAL PROTEIN L33, CHLOROPLASTIC"/>
    <property type="match status" value="1"/>
</dbReference>
<dbReference type="PANTHER" id="PTHR43168:SF2">
    <property type="entry name" value="LARGE RIBOSOMAL SUBUNIT PROTEIN BL33C"/>
    <property type="match status" value="1"/>
</dbReference>
<dbReference type="Pfam" id="PF00471">
    <property type="entry name" value="Ribosomal_L33"/>
    <property type="match status" value="1"/>
</dbReference>
<dbReference type="SUPFAM" id="SSF57829">
    <property type="entry name" value="Zn-binding ribosomal proteins"/>
    <property type="match status" value="1"/>
</dbReference>
<dbReference type="PROSITE" id="PS00582">
    <property type="entry name" value="RIBOSOMAL_L33"/>
    <property type="match status" value="1"/>
</dbReference>
<proteinExistence type="inferred from homology"/>
<keyword id="KW-0150">Chloroplast</keyword>
<keyword id="KW-0934">Plastid</keyword>
<keyword id="KW-0687">Ribonucleoprotein</keyword>
<keyword id="KW-0689">Ribosomal protein</keyword>
<feature type="chain" id="PRO_0000356825" description="Large ribosomal subunit protein bL33c">
    <location>
        <begin position="1"/>
        <end position="56"/>
    </location>
</feature>
<gene>
    <name evidence="1" type="primary">rpl33</name>
</gene>